<sequence length="315" mass="34656">MANLKEIRDRIKSVKNTRKITEAMRLVAAAKVRRAQDLVLRSRPFADRLARVLESLQSRIALESADTPLLQARDPRHITLVAMTGDRGLCGGFNANIIKRTEQRFAELKASGYEVALITVGRKVDTYFQNRNYPITASFTGLDQLPTSTDALQVSDAVQAEFLGGATDRVELIYTKFINLVSTKPVSQTLLPLDPQGIASPDDEIFRFVTKEGELGVERSSASNQEDKLKSDLVFEQSPSQLLDVLLPLYLQNQVLRSLQESAASELASRMTAMNNASDNAKALAKELTLDYNKARQAAITQEILEVVGGASAMA</sequence>
<accession>A5GV71</accession>
<organism>
    <name type="scientific">Synechococcus sp. (strain RCC307)</name>
    <dbReference type="NCBI Taxonomy" id="316278"/>
    <lineage>
        <taxon>Bacteria</taxon>
        <taxon>Bacillati</taxon>
        <taxon>Cyanobacteriota</taxon>
        <taxon>Cyanophyceae</taxon>
        <taxon>Synechococcales</taxon>
        <taxon>Synechococcaceae</taxon>
        <taxon>Synechococcus</taxon>
    </lineage>
</organism>
<evidence type="ECO:0000255" key="1">
    <source>
        <dbReference type="HAMAP-Rule" id="MF_00815"/>
    </source>
</evidence>
<feature type="chain" id="PRO_1000053365" description="ATP synthase gamma chain">
    <location>
        <begin position="1"/>
        <end position="315"/>
    </location>
</feature>
<comment type="function">
    <text evidence="1">Produces ATP from ADP in the presence of a proton gradient across the membrane. The gamma chain is believed to be important in regulating ATPase activity and the flow of protons through the CF(0) complex.</text>
</comment>
<comment type="subunit">
    <text evidence="1">F-type ATPases have 2 components, CF(1) - the catalytic core - and CF(0) - the membrane proton channel. CF(1) has five subunits: alpha(3), beta(3), gamma(1), delta(1), epsilon(1). CF(0) has three main subunits: a, b and c.</text>
</comment>
<comment type="subcellular location">
    <subcellularLocation>
        <location evidence="1">Cellular thylakoid membrane</location>
        <topology evidence="1">Peripheral membrane protein</topology>
    </subcellularLocation>
</comment>
<comment type="similarity">
    <text evidence="1">Belongs to the ATPase gamma chain family.</text>
</comment>
<keyword id="KW-0066">ATP synthesis</keyword>
<keyword id="KW-0139">CF(1)</keyword>
<keyword id="KW-0375">Hydrogen ion transport</keyword>
<keyword id="KW-0406">Ion transport</keyword>
<keyword id="KW-0472">Membrane</keyword>
<keyword id="KW-1185">Reference proteome</keyword>
<keyword id="KW-0793">Thylakoid</keyword>
<keyword id="KW-0813">Transport</keyword>
<proteinExistence type="inferred from homology"/>
<dbReference type="EMBL" id="CT978603">
    <property type="protein sequence ID" value="CAK28780.1"/>
    <property type="molecule type" value="Genomic_DNA"/>
</dbReference>
<dbReference type="SMR" id="A5GV71"/>
<dbReference type="STRING" id="316278.SynRCC307_1877"/>
<dbReference type="KEGG" id="syr:SynRCC307_1877"/>
<dbReference type="eggNOG" id="COG0224">
    <property type="taxonomic scope" value="Bacteria"/>
</dbReference>
<dbReference type="HOGENOM" id="CLU_050669_0_0_3"/>
<dbReference type="OrthoDB" id="9812769at2"/>
<dbReference type="Proteomes" id="UP000001115">
    <property type="component" value="Chromosome"/>
</dbReference>
<dbReference type="GO" id="GO:0031676">
    <property type="term" value="C:plasma membrane-derived thylakoid membrane"/>
    <property type="evidence" value="ECO:0007669"/>
    <property type="project" value="UniProtKB-SubCell"/>
</dbReference>
<dbReference type="GO" id="GO:0045259">
    <property type="term" value="C:proton-transporting ATP synthase complex"/>
    <property type="evidence" value="ECO:0007669"/>
    <property type="project" value="UniProtKB-KW"/>
</dbReference>
<dbReference type="GO" id="GO:0005524">
    <property type="term" value="F:ATP binding"/>
    <property type="evidence" value="ECO:0007669"/>
    <property type="project" value="UniProtKB-UniRule"/>
</dbReference>
<dbReference type="GO" id="GO:0046933">
    <property type="term" value="F:proton-transporting ATP synthase activity, rotational mechanism"/>
    <property type="evidence" value="ECO:0007669"/>
    <property type="project" value="UniProtKB-UniRule"/>
</dbReference>
<dbReference type="CDD" id="cd12151">
    <property type="entry name" value="F1-ATPase_gamma"/>
    <property type="match status" value="1"/>
</dbReference>
<dbReference type="FunFam" id="3.40.1380.10:FF:000006">
    <property type="entry name" value="ATP synthase gamma chain"/>
    <property type="match status" value="1"/>
</dbReference>
<dbReference type="FunFam" id="1.10.287.80:FF:000003">
    <property type="entry name" value="ATP synthase gamma chain, chloroplastic"/>
    <property type="match status" value="1"/>
</dbReference>
<dbReference type="Gene3D" id="3.40.1380.10">
    <property type="match status" value="1"/>
</dbReference>
<dbReference type="Gene3D" id="1.10.287.80">
    <property type="entry name" value="ATP synthase, gamma subunit, helix hairpin domain"/>
    <property type="match status" value="2"/>
</dbReference>
<dbReference type="HAMAP" id="MF_00815">
    <property type="entry name" value="ATP_synth_gamma_bact"/>
    <property type="match status" value="1"/>
</dbReference>
<dbReference type="InterPro" id="IPR035968">
    <property type="entry name" value="ATP_synth_F1_ATPase_gsu"/>
</dbReference>
<dbReference type="InterPro" id="IPR000131">
    <property type="entry name" value="ATP_synth_F1_gsu"/>
</dbReference>
<dbReference type="InterPro" id="IPR023632">
    <property type="entry name" value="ATP_synth_F1_gsu_CS"/>
</dbReference>
<dbReference type="NCBIfam" id="TIGR01146">
    <property type="entry name" value="ATPsyn_F1gamma"/>
    <property type="match status" value="1"/>
</dbReference>
<dbReference type="NCBIfam" id="NF004145">
    <property type="entry name" value="PRK05621.1-2"/>
    <property type="match status" value="1"/>
</dbReference>
<dbReference type="PANTHER" id="PTHR11693">
    <property type="entry name" value="ATP SYNTHASE GAMMA CHAIN"/>
    <property type="match status" value="1"/>
</dbReference>
<dbReference type="PANTHER" id="PTHR11693:SF41">
    <property type="entry name" value="ATP SYNTHASE GAMMA CHAIN, CHLOROPLASTIC"/>
    <property type="match status" value="1"/>
</dbReference>
<dbReference type="Pfam" id="PF00231">
    <property type="entry name" value="ATP-synt"/>
    <property type="match status" value="1"/>
</dbReference>
<dbReference type="PRINTS" id="PR00126">
    <property type="entry name" value="ATPASEGAMMA"/>
</dbReference>
<dbReference type="SUPFAM" id="SSF52943">
    <property type="entry name" value="ATP synthase (F1-ATPase), gamma subunit"/>
    <property type="match status" value="1"/>
</dbReference>
<dbReference type="PROSITE" id="PS00153">
    <property type="entry name" value="ATPASE_GAMMA"/>
    <property type="match status" value="1"/>
</dbReference>
<gene>
    <name evidence="1" type="primary">atpG</name>
    <name evidence="1" type="synonym">atpC</name>
    <name type="ordered locus">SynRCC307_1877</name>
</gene>
<name>ATPG_SYNR3</name>
<protein>
    <recommendedName>
        <fullName evidence="1">ATP synthase gamma chain</fullName>
    </recommendedName>
    <alternativeName>
        <fullName evidence="1">ATP synthase F1 sector gamma subunit</fullName>
    </alternativeName>
    <alternativeName>
        <fullName evidence="1">F-ATPase gamma subunit</fullName>
    </alternativeName>
</protein>
<reference key="1">
    <citation type="submission" date="2006-05" db="EMBL/GenBank/DDBJ databases">
        <authorList>
            <consortium name="Genoscope"/>
        </authorList>
    </citation>
    <scope>NUCLEOTIDE SEQUENCE [LARGE SCALE GENOMIC DNA]</scope>
    <source>
        <strain>RCC307</strain>
    </source>
</reference>